<comment type="function">
    <text evidence="1">Binds the lower part of the 30S subunit head. Binds mRNA in the 70S ribosome, positioning it for translation.</text>
</comment>
<comment type="subunit">
    <text evidence="1">Part of the 30S ribosomal subunit. Forms a tight complex with proteins S10 and S14.</text>
</comment>
<comment type="similarity">
    <text evidence="1">Belongs to the universal ribosomal protein uS3 family.</text>
</comment>
<organism>
    <name type="scientific">Salmonella paratyphi B (strain ATCC BAA-1250 / SPB7)</name>
    <dbReference type="NCBI Taxonomy" id="1016998"/>
    <lineage>
        <taxon>Bacteria</taxon>
        <taxon>Pseudomonadati</taxon>
        <taxon>Pseudomonadota</taxon>
        <taxon>Gammaproteobacteria</taxon>
        <taxon>Enterobacterales</taxon>
        <taxon>Enterobacteriaceae</taxon>
        <taxon>Salmonella</taxon>
    </lineage>
</organism>
<gene>
    <name evidence="1" type="primary">rpsC</name>
    <name type="ordered locus">SPAB_04275</name>
</gene>
<dbReference type="EMBL" id="CP000886">
    <property type="protein sequence ID" value="ABX69592.1"/>
    <property type="molecule type" value="Genomic_DNA"/>
</dbReference>
<dbReference type="RefSeq" id="WP_000529945.1">
    <property type="nucleotide sequence ID" value="NC_010102.1"/>
</dbReference>
<dbReference type="SMR" id="A9MSZ2"/>
<dbReference type="GeneID" id="97603663"/>
<dbReference type="KEGG" id="spq:SPAB_04275"/>
<dbReference type="PATRIC" id="fig|1016998.12.peg.4021"/>
<dbReference type="HOGENOM" id="CLU_058591_0_2_6"/>
<dbReference type="BioCyc" id="SENT1016998:SPAB_RS17405-MONOMER"/>
<dbReference type="Proteomes" id="UP000008556">
    <property type="component" value="Chromosome"/>
</dbReference>
<dbReference type="GO" id="GO:0022627">
    <property type="term" value="C:cytosolic small ribosomal subunit"/>
    <property type="evidence" value="ECO:0007669"/>
    <property type="project" value="TreeGrafter"/>
</dbReference>
<dbReference type="GO" id="GO:0003729">
    <property type="term" value="F:mRNA binding"/>
    <property type="evidence" value="ECO:0007669"/>
    <property type="project" value="UniProtKB-UniRule"/>
</dbReference>
<dbReference type="GO" id="GO:0019843">
    <property type="term" value="F:rRNA binding"/>
    <property type="evidence" value="ECO:0007669"/>
    <property type="project" value="UniProtKB-UniRule"/>
</dbReference>
<dbReference type="GO" id="GO:0003735">
    <property type="term" value="F:structural constituent of ribosome"/>
    <property type="evidence" value="ECO:0007669"/>
    <property type="project" value="InterPro"/>
</dbReference>
<dbReference type="GO" id="GO:0006412">
    <property type="term" value="P:translation"/>
    <property type="evidence" value="ECO:0007669"/>
    <property type="project" value="UniProtKB-UniRule"/>
</dbReference>
<dbReference type="CDD" id="cd02412">
    <property type="entry name" value="KH-II_30S_S3"/>
    <property type="match status" value="1"/>
</dbReference>
<dbReference type="FunFam" id="3.30.1140.32:FF:000001">
    <property type="entry name" value="30S ribosomal protein S3"/>
    <property type="match status" value="1"/>
</dbReference>
<dbReference type="FunFam" id="3.30.300.20:FF:000001">
    <property type="entry name" value="30S ribosomal protein S3"/>
    <property type="match status" value="1"/>
</dbReference>
<dbReference type="Gene3D" id="3.30.300.20">
    <property type="match status" value="1"/>
</dbReference>
<dbReference type="Gene3D" id="3.30.1140.32">
    <property type="entry name" value="Ribosomal protein S3, C-terminal domain"/>
    <property type="match status" value="1"/>
</dbReference>
<dbReference type="HAMAP" id="MF_01309_B">
    <property type="entry name" value="Ribosomal_uS3_B"/>
    <property type="match status" value="1"/>
</dbReference>
<dbReference type="InterPro" id="IPR004087">
    <property type="entry name" value="KH_dom"/>
</dbReference>
<dbReference type="InterPro" id="IPR015946">
    <property type="entry name" value="KH_dom-like_a/b"/>
</dbReference>
<dbReference type="InterPro" id="IPR004044">
    <property type="entry name" value="KH_dom_type_2"/>
</dbReference>
<dbReference type="InterPro" id="IPR009019">
    <property type="entry name" value="KH_sf_prok-type"/>
</dbReference>
<dbReference type="InterPro" id="IPR036419">
    <property type="entry name" value="Ribosomal_S3_C_sf"/>
</dbReference>
<dbReference type="InterPro" id="IPR005704">
    <property type="entry name" value="Ribosomal_uS3_bac-typ"/>
</dbReference>
<dbReference type="InterPro" id="IPR001351">
    <property type="entry name" value="Ribosomal_uS3_C"/>
</dbReference>
<dbReference type="InterPro" id="IPR018280">
    <property type="entry name" value="Ribosomal_uS3_CS"/>
</dbReference>
<dbReference type="NCBIfam" id="TIGR01009">
    <property type="entry name" value="rpsC_bact"/>
    <property type="match status" value="1"/>
</dbReference>
<dbReference type="PANTHER" id="PTHR11760">
    <property type="entry name" value="30S/40S RIBOSOMAL PROTEIN S3"/>
    <property type="match status" value="1"/>
</dbReference>
<dbReference type="PANTHER" id="PTHR11760:SF19">
    <property type="entry name" value="SMALL RIBOSOMAL SUBUNIT PROTEIN US3C"/>
    <property type="match status" value="1"/>
</dbReference>
<dbReference type="Pfam" id="PF07650">
    <property type="entry name" value="KH_2"/>
    <property type="match status" value="1"/>
</dbReference>
<dbReference type="Pfam" id="PF00189">
    <property type="entry name" value="Ribosomal_S3_C"/>
    <property type="match status" value="1"/>
</dbReference>
<dbReference type="SMART" id="SM00322">
    <property type="entry name" value="KH"/>
    <property type="match status" value="1"/>
</dbReference>
<dbReference type="SUPFAM" id="SSF54814">
    <property type="entry name" value="Prokaryotic type KH domain (KH-domain type II)"/>
    <property type="match status" value="1"/>
</dbReference>
<dbReference type="SUPFAM" id="SSF54821">
    <property type="entry name" value="Ribosomal protein S3 C-terminal domain"/>
    <property type="match status" value="1"/>
</dbReference>
<dbReference type="PROSITE" id="PS50823">
    <property type="entry name" value="KH_TYPE_2"/>
    <property type="match status" value="1"/>
</dbReference>
<dbReference type="PROSITE" id="PS00548">
    <property type="entry name" value="RIBOSOMAL_S3"/>
    <property type="match status" value="1"/>
</dbReference>
<evidence type="ECO:0000255" key="1">
    <source>
        <dbReference type="HAMAP-Rule" id="MF_01309"/>
    </source>
</evidence>
<evidence type="ECO:0000305" key="2"/>
<keyword id="KW-0687">Ribonucleoprotein</keyword>
<keyword id="KW-0689">Ribosomal protein</keyword>
<keyword id="KW-0694">RNA-binding</keyword>
<keyword id="KW-0699">rRNA-binding</keyword>
<sequence>MGQKVHPNGIRLGIVKPWNSTWFANTKEFADNLDSDFKVRQYLTKELAKASVSRIVIERPAKSIRVTIHTARPGIVIGKKGEDVEKLRKVVADIAGVPAQINIAEVRKPELDAKLVADSITSQLERRVMFRRAMKRAVQNAMRLGAKGIKVEVSGRLGGAEIARTEWYREGRVPLHTLRADIDYNTSEAHTTYGVIGVKVWIFKGEILGGMAAVEQPEKPAAQPKKQQRKGRK</sequence>
<accession>A9MSZ2</accession>
<name>RS3_SALPB</name>
<reference key="1">
    <citation type="submission" date="2007-11" db="EMBL/GenBank/DDBJ databases">
        <authorList>
            <consortium name="The Salmonella enterica serovar Paratyphi B Genome Sequencing Project"/>
            <person name="McClelland M."/>
            <person name="Sanderson E.K."/>
            <person name="Porwollik S."/>
            <person name="Spieth J."/>
            <person name="Clifton W.S."/>
            <person name="Fulton R."/>
            <person name="Cordes M."/>
            <person name="Wollam A."/>
            <person name="Shah N."/>
            <person name="Pepin K."/>
            <person name="Bhonagiri V."/>
            <person name="Nash W."/>
            <person name="Johnson M."/>
            <person name="Thiruvilangam P."/>
            <person name="Wilson R."/>
        </authorList>
    </citation>
    <scope>NUCLEOTIDE SEQUENCE [LARGE SCALE GENOMIC DNA]</scope>
    <source>
        <strain>ATCC BAA-1250 / SPB7</strain>
    </source>
</reference>
<feature type="chain" id="PRO_1000086155" description="Small ribosomal subunit protein uS3">
    <location>
        <begin position="1"/>
        <end position="233"/>
    </location>
</feature>
<feature type="domain" description="KH type-2" evidence="1">
    <location>
        <begin position="39"/>
        <end position="107"/>
    </location>
</feature>
<protein>
    <recommendedName>
        <fullName evidence="1">Small ribosomal subunit protein uS3</fullName>
    </recommendedName>
    <alternativeName>
        <fullName evidence="2">30S ribosomal protein S3</fullName>
    </alternativeName>
</protein>
<proteinExistence type="inferred from homology"/>